<comment type="function">
    <text evidence="2">Involved in thiosulfate metabolism.</text>
</comment>
<comment type="interaction">
    <interactant intactId="EBI-9130839">
        <id>P33014</id>
    </interactant>
    <interactant intactId="EBI-546182">
        <id>P63284</id>
        <label>clpB</label>
    </interactant>
    <organismsDiffer>false</organismsDiffer>
    <experiments>3</experiments>
</comment>
<comment type="induction">
    <text evidence="2">Member of the CysB regulon (PubMed:32779574). mRNA levels are increased by disruption of the rppH gene, which encodes a RNA pyrophosphohydrolase (PubMed:32779574).</text>
</comment>
<comment type="disruption phenotype">
    <text evidence="2">The tsuB-cysA double deletion mutant cannot grow with thiosulfate as sole sulfur source.</text>
</comment>
<comment type="similarity">
    <text evidence="4">Belongs to the sulfur carrier protein TusA family.</text>
</comment>
<keyword id="KW-1185">Reference proteome</keyword>
<organism>
    <name type="scientific">Escherichia coli (strain K12)</name>
    <dbReference type="NCBI Taxonomy" id="83333"/>
    <lineage>
        <taxon>Bacteria</taxon>
        <taxon>Pseudomonadati</taxon>
        <taxon>Pseudomonadota</taxon>
        <taxon>Gammaproteobacteria</taxon>
        <taxon>Enterobacterales</taxon>
        <taxon>Enterobacteriaceae</taxon>
        <taxon>Escherichia</taxon>
    </lineage>
</organism>
<gene>
    <name evidence="3" type="primary">tsuB</name>
    <name type="synonym">yeeD</name>
    <name type="ordered locus">b2012</name>
    <name type="ordered locus">JW1994</name>
</gene>
<proteinExistence type="evidence at protein level"/>
<sequence>MVIKKLDVVTQVCPFPLIEAKAALAEMVSGDELVIEFDCTQATEAIPQWAAEEGHAITDYQQIGDAAWSITVQKA</sequence>
<name>TSUB_ECOLI</name>
<reference key="1">
    <citation type="submission" date="1993-10" db="EMBL/GenBank/DDBJ databases">
        <title>Automated multiplex sequencing of the E.coli genome.</title>
        <authorList>
            <person name="Richterich P."/>
            <person name="Lakey N."/>
            <person name="Gryan G."/>
            <person name="Jaehn L."/>
            <person name="Mintz L."/>
            <person name="Robison K."/>
            <person name="Church G.M."/>
        </authorList>
    </citation>
    <scope>NUCLEOTIDE SEQUENCE [LARGE SCALE GENOMIC DNA]</scope>
    <source>
        <strain>K12 / BHB2600</strain>
    </source>
</reference>
<reference key="2">
    <citation type="journal article" date="1996" name="DNA Res.">
        <title>A 460-kb DNA sequence of the Escherichia coli K-12 genome corresponding to the 40.1-50.0 min region on the linkage map.</title>
        <authorList>
            <person name="Itoh T."/>
            <person name="Aiba H."/>
            <person name="Baba T."/>
            <person name="Fujita K."/>
            <person name="Hayashi K."/>
            <person name="Inada T."/>
            <person name="Isono K."/>
            <person name="Kasai H."/>
            <person name="Kimura S."/>
            <person name="Kitakawa M."/>
            <person name="Kitagawa M."/>
            <person name="Makino K."/>
            <person name="Miki T."/>
            <person name="Mizobuchi K."/>
            <person name="Mori H."/>
            <person name="Mori T."/>
            <person name="Motomura K."/>
            <person name="Nakade S."/>
            <person name="Nakamura Y."/>
            <person name="Nashimoto H."/>
            <person name="Nishio Y."/>
            <person name="Oshima T."/>
            <person name="Saito N."/>
            <person name="Sampei G."/>
            <person name="Seki Y."/>
            <person name="Sivasundaram S."/>
            <person name="Tagami H."/>
            <person name="Takeda J."/>
            <person name="Takemoto K."/>
            <person name="Wada C."/>
            <person name="Yamamoto Y."/>
            <person name="Horiuchi T."/>
        </authorList>
    </citation>
    <scope>NUCLEOTIDE SEQUENCE [LARGE SCALE GENOMIC DNA]</scope>
    <source>
        <strain>K12 / W3110 / ATCC 27325 / DSM 5911</strain>
    </source>
</reference>
<reference key="3">
    <citation type="journal article" date="1997" name="Science">
        <title>The complete genome sequence of Escherichia coli K-12.</title>
        <authorList>
            <person name="Blattner F.R."/>
            <person name="Plunkett G. III"/>
            <person name="Bloch C.A."/>
            <person name="Perna N.T."/>
            <person name="Burland V."/>
            <person name="Riley M."/>
            <person name="Collado-Vides J."/>
            <person name="Glasner J.D."/>
            <person name="Rode C.K."/>
            <person name="Mayhew G.F."/>
            <person name="Gregor J."/>
            <person name="Davis N.W."/>
            <person name="Kirkpatrick H.A."/>
            <person name="Goeden M.A."/>
            <person name="Rose D.J."/>
            <person name="Mau B."/>
            <person name="Shao Y."/>
        </authorList>
    </citation>
    <scope>NUCLEOTIDE SEQUENCE [LARGE SCALE GENOMIC DNA]</scope>
    <source>
        <strain>K12 / MG1655 / ATCC 47076</strain>
    </source>
</reference>
<reference key="4">
    <citation type="journal article" date="2006" name="Mol. Syst. Biol.">
        <title>Highly accurate genome sequences of Escherichia coli K-12 strains MG1655 and W3110.</title>
        <authorList>
            <person name="Hayashi K."/>
            <person name="Morooka N."/>
            <person name="Yamamoto Y."/>
            <person name="Fujita K."/>
            <person name="Isono K."/>
            <person name="Choi S."/>
            <person name="Ohtsubo E."/>
            <person name="Baba T."/>
            <person name="Wanner B.L."/>
            <person name="Mori H."/>
            <person name="Horiuchi T."/>
        </authorList>
    </citation>
    <scope>NUCLEOTIDE SEQUENCE [LARGE SCALE GENOMIC DNA]</scope>
    <source>
        <strain>K12 / W3110 / ATCC 27325 / DSM 5911</strain>
    </source>
</reference>
<reference key="5">
    <citation type="journal article" date="2021" name="J. Gen. Appl. Microbiol.">
        <title>Defect of RNA pyrophosphohydrolase RppH enhances fermentative production of L-cysteine in Escherichia coli.</title>
        <authorList>
            <person name="Morigasaki S."/>
            <person name="Umeyama A."/>
            <person name="Kawano Y."/>
            <person name="Aizawa Y."/>
            <person name="Ohtsu I."/>
        </authorList>
    </citation>
    <scope>FUNCTION</scope>
    <scope>INDUCTION</scope>
    <scope>DISRUPTION PHENOTYPE</scope>
</reference>
<feature type="chain" id="PRO_0000159068" description="Putative sulfur carrier protein TsuB">
    <location>
        <begin position="1"/>
        <end position="75"/>
    </location>
</feature>
<feature type="active site" description="Cysteine persulfide intermediate" evidence="1">
    <location>
        <position position="13"/>
    </location>
</feature>
<accession>P33014</accession>
<evidence type="ECO:0000250" key="1">
    <source>
        <dbReference type="UniProtKB" id="P0A890"/>
    </source>
</evidence>
<evidence type="ECO:0000269" key="2">
    <source>
    </source>
</evidence>
<evidence type="ECO:0000303" key="3">
    <source>
    </source>
</evidence>
<evidence type="ECO:0000305" key="4"/>
<dbReference type="EMBL" id="U00009">
    <property type="protein sequence ID" value="AAA16418.1"/>
    <property type="molecule type" value="Genomic_DNA"/>
</dbReference>
<dbReference type="EMBL" id="U00096">
    <property type="protein sequence ID" value="AAC75073.1"/>
    <property type="molecule type" value="Genomic_DNA"/>
</dbReference>
<dbReference type="EMBL" id="AP009048">
    <property type="protein sequence ID" value="BAA15840.1"/>
    <property type="molecule type" value="Genomic_DNA"/>
</dbReference>
<dbReference type="PIR" id="C64966">
    <property type="entry name" value="C64966"/>
</dbReference>
<dbReference type="RefSeq" id="NP_416516.1">
    <property type="nucleotide sequence ID" value="NC_000913.3"/>
</dbReference>
<dbReference type="RefSeq" id="WP_000234896.1">
    <property type="nucleotide sequence ID" value="NZ_LN832404.1"/>
</dbReference>
<dbReference type="SMR" id="P33014"/>
<dbReference type="BioGRID" id="4260415">
    <property type="interactions" value="13"/>
</dbReference>
<dbReference type="BioGRID" id="850886">
    <property type="interactions" value="20"/>
</dbReference>
<dbReference type="FunCoup" id="P33014">
    <property type="interactions" value="11"/>
</dbReference>
<dbReference type="IntAct" id="P33014">
    <property type="interactions" value="20"/>
</dbReference>
<dbReference type="STRING" id="511145.b2012"/>
<dbReference type="jPOST" id="P33014"/>
<dbReference type="PaxDb" id="511145-b2012"/>
<dbReference type="EnsemblBacteria" id="AAC75073">
    <property type="protein sequence ID" value="AAC75073"/>
    <property type="gene ID" value="b2012"/>
</dbReference>
<dbReference type="GeneID" id="946539"/>
<dbReference type="KEGG" id="ecj:JW1994"/>
<dbReference type="KEGG" id="eco:b2012"/>
<dbReference type="KEGG" id="ecoc:C3026_11350"/>
<dbReference type="PATRIC" id="fig|511145.12.peg.2089"/>
<dbReference type="EchoBASE" id="EB1840"/>
<dbReference type="eggNOG" id="COG0425">
    <property type="taxonomic scope" value="Bacteria"/>
</dbReference>
<dbReference type="HOGENOM" id="CLU_165255_0_3_6"/>
<dbReference type="InParanoid" id="P33014"/>
<dbReference type="OMA" id="SWTITVQ"/>
<dbReference type="OrthoDB" id="9797352at2"/>
<dbReference type="PhylomeDB" id="P33014"/>
<dbReference type="BioCyc" id="EcoCyc:EG11894-MONOMER"/>
<dbReference type="PRO" id="PR:P33014"/>
<dbReference type="Proteomes" id="UP000000625">
    <property type="component" value="Chromosome"/>
</dbReference>
<dbReference type="CDD" id="cd00291">
    <property type="entry name" value="SirA_YedF_YeeD"/>
    <property type="match status" value="1"/>
</dbReference>
<dbReference type="Gene3D" id="3.30.110.40">
    <property type="entry name" value="TusA-like domain"/>
    <property type="match status" value="1"/>
</dbReference>
<dbReference type="InterPro" id="IPR001455">
    <property type="entry name" value="TusA-like"/>
</dbReference>
<dbReference type="InterPro" id="IPR036868">
    <property type="entry name" value="TusA-like_sf"/>
</dbReference>
<dbReference type="NCBIfam" id="NF041048">
    <property type="entry name" value="TusA_like_YeeD"/>
    <property type="match status" value="1"/>
</dbReference>
<dbReference type="PANTHER" id="PTHR33279">
    <property type="entry name" value="SULFUR CARRIER PROTEIN YEDF-RELATED"/>
    <property type="match status" value="1"/>
</dbReference>
<dbReference type="PANTHER" id="PTHR33279:SF6">
    <property type="entry name" value="SULFUR CARRIER PROTEIN YEDF-RELATED"/>
    <property type="match status" value="1"/>
</dbReference>
<dbReference type="Pfam" id="PF01206">
    <property type="entry name" value="TusA"/>
    <property type="match status" value="1"/>
</dbReference>
<dbReference type="SUPFAM" id="SSF64307">
    <property type="entry name" value="SirA-like"/>
    <property type="match status" value="1"/>
</dbReference>
<dbReference type="PROSITE" id="PS01148">
    <property type="entry name" value="UPF0033"/>
    <property type="match status" value="1"/>
</dbReference>
<protein>
    <recommendedName>
        <fullName evidence="4">Putative sulfur carrier protein TsuB</fullName>
    </recommendedName>
    <alternativeName>
        <fullName evidence="3">Thiosulfate uptake protein B</fullName>
    </alternativeName>
</protein>